<name>FPG_SALPB</name>
<feature type="initiator methionine" description="Removed" evidence="1">
    <location>
        <position position="1"/>
    </location>
</feature>
<feature type="chain" id="PRO_1000075710" description="Formamidopyrimidine-DNA glycosylase">
    <location>
        <begin position="2"/>
        <end position="269"/>
    </location>
</feature>
<feature type="zinc finger region" description="FPG-type" evidence="2">
    <location>
        <begin position="235"/>
        <end position="269"/>
    </location>
</feature>
<feature type="active site" description="Schiff-base intermediate with DNA" evidence="2">
    <location>
        <position position="2"/>
    </location>
</feature>
<feature type="active site" description="Proton donor" evidence="2">
    <location>
        <position position="3"/>
    </location>
</feature>
<feature type="active site" description="Proton donor; for beta-elimination activity" evidence="2">
    <location>
        <position position="57"/>
    </location>
</feature>
<feature type="active site" description="Proton donor; for delta-elimination activity" evidence="2">
    <location>
        <position position="259"/>
    </location>
</feature>
<feature type="binding site" evidence="2">
    <location>
        <position position="90"/>
    </location>
    <ligand>
        <name>DNA</name>
        <dbReference type="ChEBI" id="CHEBI:16991"/>
    </ligand>
</feature>
<feature type="binding site" evidence="2">
    <location>
        <position position="109"/>
    </location>
    <ligand>
        <name>DNA</name>
        <dbReference type="ChEBI" id="CHEBI:16991"/>
    </ligand>
</feature>
<feature type="binding site" evidence="2">
    <location>
        <position position="150"/>
    </location>
    <ligand>
        <name>DNA</name>
        <dbReference type="ChEBI" id="CHEBI:16991"/>
    </ligand>
</feature>
<reference key="1">
    <citation type="submission" date="2007-11" db="EMBL/GenBank/DDBJ databases">
        <authorList>
            <consortium name="The Salmonella enterica serovar Paratyphi B Genome Sequencing Project"/>
            <person name="McClelland M."/>
            <person name="Sanderson E.K."/>
            <person name="Porwollik S."/>
            <person name="Spieth J."/>
            <person name="Clifton W.S."/>
            <person name="Fulton R."/>
            <person name="Cordes M."/>
            <person name="Wollam A."/>
            <person name="Shah N."/>
            <person name="Pepin K."/>
            <person name="Bhonagiri V."/>
            <person name="Nash W."/>
            <person name="Johnson M."/>
            <person name="Thiruvilangam P."/>
            <person name="Wilson R."/>
        </authorList>
    </citation>
    <scope>NUCLEOTIDE SEQUENCE [LARGE SCALE GENOMIC DNA]</scope>
    <source>
        <strain>ATCC BAA-1250 / SPB7</strain>
    </source>
</reference>
<organism>
    <name type="scientific">Salmonella paratyphi B (strain ATCC BAA-1250 / SPB7)</name>
    <dbReference type="NCBI Taxonomy" id="1016998"/>
    <lineage>
        <taxon>Bacteria</taxon>
        <taxon>Pseudomonadati</taxon>
        <taxon>Pseudomonadota</taxon>
        <taxon>Gammaproteobacteria</taxon>
        <taxon>Enterobacterales</taxon>
        <taxon>Enterobacteriaceae</taxon>
        <taxon>Salmonella</taxon>
    </lineage>
</organism>
<comment type="function">
    <text evidence="2">Involved in base excision repair of DNA damaged by oxidation or by mutagenic agents. Acts as a DNA glycosylase that recognizes and removes damaged bases. Has a preference for oxidized purines, such as 7,8-dihydro-8-oxoguanine (8-oxoG). Has AP (apurinic/apyrimidinic) lyase activity and introduces nicks in the DNA strand. Cleaves the DNA backbone by beta-delta elimination to generate a single-strand break at the site of the removed base with both 3'- and 5'-phosphates.</text>
</comment>
<comment type="catalytic activity">
    <reaction evidence="2">
        <text>Hydrolysis of DNA containing ring-opened 7-methylguanine residues, releasing 2,6-diamino-4-hydroxy-5-(N-methyl)formamidopyrimidine.</text>
        <dbReference type="EC" id="3.2.2.23"/>
    </reaction>
</comment>
<comment type="catalytic activity">
    <reaction evidence="2">
        <text>2'-deoxyribonucleotide-(2'-deoxyribose 5'-phosphate)-2'-deoxyribonucleotide-DNA = a 3'-end 2'-deoxyribonucleotide-(2,3-dehydro-2,3-deoxyribose 5'-phosphate)-DNA + a 5'-end 5'-phospho-2'-deoxyribonucleoside-DNA + H(+)</text>
        <dbReference type="Rhea" id="RHEA:66592"/>
        <dbReference type="Rhea" id="RHEA-COMP:13180"/>
        <dbReference type="Rhea" id="RHEA-COMP:16897"/>
        <dbReference type="Rhea" id="RHEA-COMP:17067"/>
        <dbReference type="ChEBI" id="CHEBI:15378"/>
        <dbReference type="ChEBI" id="CHEBI:136412"/>
        <dbReference type="ChEBI" id="CHEBI:157695"/>
        <dbReference type="ChEBI" id="CHEBI:167181"/>
        <dbReference type="EC" id="4.2.99.18"/>
    </reaction>
</comment>
<comment type="cofactor">
    <cofactor evidence="2">
        <name>Zn(2+)</name>
        <dbReference type="ChEBI" id="CHEBI:29105"/>
    </cofactor>
    <text evidence="2">Binds 1 zinc ion per subunit.</text>
</comment>
<comment type="subunit">
    <text evidence="2">Monomer.</text>
</comment>
<comment type="similarity">
    <text evidence="2">Belongs to the FPG family.</text>
</comment>
<sequence length="269" mass="30165">MPELPEVETSRRGIEPHLVGATILHAHIRNGRLRWPVSDEIYRLSDTPVLSVQRRAKYLLLELPDGWIIIHLGMSGSLRILSEALPAEKHDHVDLVMSNGKILRYTDPRRFGAWLWTKELEGHNVLAHLGPEPLSDEFNGEYLQQKCAKKKTAIKPWLMDNKLVVGVGNIYASESLFAAGIHPDRLASSLSTEECDLLARVIKAVLLRSIEQGGTTLKDFLQGDGKPGYFAQELQVYGRKGEPCRVCGTPIAATKHAQRATFYCRHCQK</sequence>
<dbReference type="EC" id="3.2.2.23" evidence="2"/>
<dbReference type="EC" id="4.2.99.18" evidence="2"/>
<dbReference type="EMBL" id="CP000886">
    <property type="protein sequence ID" value="ABX69938.1"/>
    <property type="molecule type" value="Genomic_DNA"/>
</dbReference>
<dbReference type="RefSeq" id="WP_001114513.1">
    <property type="nucleotide sequence ID" value="NC_010102.1"/>
</dbReference>
<dbReference type="SMR" id="A9MVN0"/>
<dbReference type="KEGG" id="spq:SPAB_04625"/>
<dbReference type="PATRIC" id="fig|1016998.12.peg.4351"/>
<dbReference type="HOGENOM" id="CLU_038423_1_1_6"/>
<dbReference type="BioCyc" id="SENT1016998:SPAB_RS18825-MONOMER"/>
<dbReference type="Proteomes" id="UP000008556">
    <property type="component" value="Chromosome"/>
</dbReference>
<dbReference type="GO" id="GO:0034039">
    <property type="term" value="F:8-oxo-7,8-dihydroguanine DNA N-glycosylase activity"/>
    <property type="evidence" value="ECO:0007669"/>
    <property type="project" value="TreeGrafter"/>
</dbReference>
<dbReference type="GO" id="GO:0140078">
    <property type="term" value="F:class I DNA-(apurinic or apyrimidinic site) endonuclease activity"/>
    <property type="evidence" value="ECO:0007669"/>
    <property type="project" value="UniProtKB-EC"/>
</dbReference>
<dbReference type="GO" id="GO:0003684">
    <property type="term" value="F:damaged DNA binding"/>
    <property type="evidence" value="ECO:0007669"/>
    <property type="project" value="InterPro"/>
</dbReference>
<dbReference type="GO" id="GO:0008270">
    <property type="term" value="F:zinc ion binding"/>
    <property type="evidence" value="ECO:0007669"/>
    <property type="project" value="UniProtKB-UniRule"/>
</dbReference>
<dbReference type="GO" id="GO:0006284">
    <property type="term" value="P:base-excision repair"/>
    <property type="evidence" value="ECO:0007669"/>
    <property type="project" value="InterPro"/>
</dbReference>
<dbReference type="CDD" id="cd08966">
    <property type="entry name" value="EcFpg-like_N"/>
    <property type="match status" value="1"/>
</dbReference>
<dbReference type="FunFam" id="1.10.8.50:FF:000003">
    <property type="entry name" value="Formamidopyrimidine-DNA glycosylase"/>
    <property type="match status" value="1"/>
</dbReference>
<dbReference type="FunFam" id="3.20.190.10:FF:000001">
    <property type="entry name" value="Formamidopyrimidine-DNA glycosylase"/>
    <property type="match status" value="1"/>
</dbReference>
<dbReference type="Gene3D" id="1.10.8.50">
    <property type="match status" value="1"/>
</dbReference>
<dbReference type="Gene3D" id="3.20.190.10">
    <property type="entry name" value="MutM-like, N-terminal"/>
    <property type="match status" value="1"/>
</dbReference>
<dbReference type="HAMAP" id="MF_00103">
    <property type="entry name" value="Fapy_DNA_glycosyl"/>
    <property type="match status" value="1"/>
</dbReference>
<dbReference type="InterPro" id="IPR015886">
    <property type="entry name" value="DNA_glyclase/AP_lyase_DNA-bd"/>
</dbReference>
<dbReference type="InterPro" id="IPR015887">
    <property type="entry name" value="DNA_glyclase_Znf_dom_DNA_BS"/>
</dbReference>
<dbReference type="InterPro" id="IPR020629">
    <property type="entry name" value="Formamido-pyr_DNA_Glyclase"/>
</dbReference>
<dbReference type="InterPro" id="IPR012319">
    <property type="entry name" value="FPG_cat"/>
</dbReference>
<dbReference type="InterPro" id="IPR035937">
    <property type="entry name" value="MutM-like_N-ter"/>
</dbReference>
<dbReference type="InterPro" id="IPR010979">
    <property type="entry name" value="Ribosomal_uS13-like_H2TH"/>
</dbReference>
<dbReference type="InterPro" id="IPR000214">
    <property type="entry name" value="Znf_DNA_glyclase/AP_lyase"/>
</dbReference>
<dbReference type="InterPro" id="IPR010663">
    <property type="entry name" value="Znf_FPG/IleRS"/>
</dbReference>
<dbReference type="NCBIfam" id="TIGR00577">
    <property type="entry name" value="fpg"/>
    <property type="match status" value="1"/>
</dbReference>
<dbReference type="NCBIfam" id="NF002211">
    <property type="entry name" value="PRK01103.1"/>
    <property type="match status" value="1"/>
</dbReference>
<dbReference type="PANTHER" id="PTHR22993">
    <property type="entry name" value="FORMAMIDOPYRIMIDINE-DNA GLYCOSYLASE"/>
    <property type="match status" value="1"/>
</dbReference>
<dbReference type="PANTHER" id="PTHR22993:SF9">
    <property type="entry name" value="FORMAMIDOPYRIMIDINE-DNA GLYCOSYLASE"/>
    <property type="match status" value="1"/>
</dbReference>
<dbReference type="Pfam" id="PF01149">
    <property type="entry name" value="Fapy_DNA_glyco"/>
    <property type="match status" value="1"/>
</dbReference>
<dbReference type="Pfam" id="PF06831">
    <property type="entry name" value="H2TH"/>
    <property type="match status" value="1"/>
</dbReference>
<dbReference type="Pfam" id="PF06827">
    <property type="entry name" value="zf-FPG_IleRS"/>
    <property type="match status" value="1"/>
</dbReference>
<dbReference type="SMART" id="SM00898">
    <property type="entry name" value="Fapy_DNA_glyco"/>
    <property type="match status" value="1"/>
</dbReference>
<dbReference type="SMART" id="SM01232">
    <property type="entry name" value="H2TH"/>
    <property type="match status" value="1"/>
</dbReference>
<dbReference type="SUPFAM" id="SSF57716">
    <property type="entry name" value="Glucocorticoid receptor-like (DNA-binding domain)"/>
    <property type="match status" value="1"/>
</dbReference>
<dbReference type="SUPFAM" id="SSF81624">
    <property type="entry name" value="N-terminal domain of MutM-like DNA repair proteins"/>
    <property type="match status" value="1"/>
</dbReference>
<dbReference type="SUPFAM" id="SSF46946">
    <property type="entry name" value="S13-like H2TH domain"/>
    <property type="match status" value="1"/>
</dbReference>
<dbReference type="PROSITE" id="PS51068">
    <property type="entry name" value="FPG_CAT"/>
    <property type="match status" value="1"/>
</dbReference>
<dbReference type="PROSITE" id="PS01242">
    <property type="entry name" value="ZF_FPG_1"/>
    <property type="match status" value="1"/>
</dbReference>
<dbReference type="PROSITE" id="PS51066">
    <property type="entry name" value="ZF_FPG_2"/>
    <property type="match status" value="1"/>
</dbReference>
<accession>A9MVN0</accession>
<keyword id="KW-0227">DNA damage</keyword>
<keyword id="KW-0234">DNA repair</keyword>
<keyword id="KW-0238">DNA-binding</keyword>
<keyword id="KW-0326">Glycosidase</keyword>
<keyword id="KW-0378">Hydrolase</keyword>
<keyword id="KW-0456">Lyase</keyword>
<keyword id="KW-0479">Metal-binding</keyword>
<keyword id="KW-0511">Multifunctional enzyme</keyword>
<keyword id="KW-0862">Zinc</keyword>
<keyword id="KW-0863">Zinc-finger</keyword>
<proteinExistence type="inferred from homology"/>
<protein>
    <recommendedName>
        <fullName evidence="2">Formamidopyrimidine-DNA glycosylase</fullName>
        <shortName evidence="2">Fapy-DNA glycosylase</shortName>
        <ecNumber evidence="2">3.2.2.23</ecNumber>
    </recommendedName>
    <alternativeName>
        <fullName evidence="2">DNA-(apurinic or apyrimidinic site) lyase MutM</fullName>
        <shortName evidence="2">AP lyase MutM</shortName>
        <ecNumber evidence="2">4.2.99.18</ecNumber>
    </alternativeName>
</protein>
<evidence type="ECO:0000250" key="1"/>
<evidence type="ECO:0000255" key="2">
    <source>
        <dbReference type="HAMAP-Rule" id="MF_00103"/>
    </source>
</evidence>
<gene>
    <name evidence="2" type="primary">mutM</name>
    <name evidence="2" type="synonym">fpg</name>
    <name type="ordered locus">SPAB_04625</name>
</gene>